<comment type="cofactor">
    <cofactor evidence="1">
        <name>heme</name>
        <dbReference type="ChEBI" id="CHEBI:30413"/>
    </cofactor>
</comment>
<comment type="similarity">
    <text evidence="2">Belongs to the cytochrome P450 family.</text>
</comment>
<reference key="1">
    <citation type="journal article" date="1997" name="Plant Physiol.">
        <title>Construction of a Lotus japonicus late nodulin expressed sequence tag library and identification of novel nodule-specific genes.</title>
        <authorList>
            <person name="Szczyglowski K."/>
            <person name="Hamburger D."/>
            <person name="Kapranov P."/>
            <person name="de Bruijn F.J."/>
        </authorList>
    </citation>
    <scope>NUCLEOTIDE SEQUENCE [MRNA]</scope>
    <source>
        <strain>cv. Gifu</strain>
        <tissue>Root nodule</tissue>
    </source>
</reference>
<organism>
    <name type="scientific">Lotus japonicus</name>
    <name type="common">Lotus corniculatus var. japonicus</name>
    <dbReference type="NCBI Taxonomy" id="34305"/>
    <lineage>
        <taxon>Eukaryota</taxon>
        <taxon>Viridiplantae</taxon>
        <taxon>Streptophyta</taxon>
        <taxon>Embryophyta</taxon>
        <taxon>Tracheophyta</taxon>
        <taxon>Spermatophyta</taxon>
        <taxon>Magnoliopsida</taxon>
        <taxon>eudicotyledons</taxon>
        <taxon>Gunneridae</taxon>
        <taxon>Pentapetalae</taxon>
        <taxon>rosids</taxon>
        <taxon>fabids</taxon>
        <taxon>Fabales</taxon>
        <taxon>Fabaceae</taxon>
        <taxon>Papilionoideae</taxon>
        <taxon>50 kb inversion clade</taxon>
        <taxon>NPAAA clade</taxon>
        <taxon>Hologalegina</taxon>
        <taxon>robinioid clade</taxon>
        <taxon>Loteae</taxon>
        <taxon>Lotus</taxon>
    </lineage>
</organism>
<evidence type="ECO:0000250" key="1"/>
<evidence type="ECO:0000305" key="2"/>
<name>C71DB_LOTJA</name>
<gene>
    <name type="primary">CYP71D11</name>
</gene>
<sequence>VALMILRKNLKKPDSIPNIPPGPWKLPIIGSIPHLVGSPPHRKLRDLAKKYGPLMHLQLGEVIFIIVSSAEYAKEVMKTHDVTFASRPRSLFTDIVFYGSTDIGFSPYGDYWRQVRKICNVELLSMKRVQSLWPIREEEVKNLIQRIASEEGSVVNLSQAIDSLIFTITSRSAFGKRYMEQEEFISCVREVMKLAGGFNIADLFPSAKWLENLTRMRSKFEYLHQKMDRILETIIDDHKANSRTKEGQVEGGEEDLIDVLLKYENSSTDQDFHLTIRNIKAILFDIFIAGSETSATTINWTMAEMMKDPILLKKAQDEVREIFQRRGKVDETCIYELKYLKAFINEVLRLHPPGPLVFRECRQACEINGYHIPAKSTVLVNTFAIGTDSKYWAEPERFCPERFIDSSIDYKGTNFEHLPFGAGRRICPGINYGMANVELVLALLLYHFDWTLPKGIKNEDLDLTEEFGVTVSKKEDLCLIPSISHPLPST</sequence>
<dbReference type="EC" id="1.14.-.-"/>
<dbReference type="EMBL" id="AF000403">
    <property type="protein sequence ID" value="AAB69644.1"/>
    <property type="molecule type" value="mRNA"/>
</dbReference>
<dbReference type="SMR" id="O22307"/>
<dbReference type="GO" id="GO:0020037">
    <property type="term" value="F:heme binding"/>
    <property type="evidence" value="ECO:0007669"/>
    <property type="project" value="InterPro"/>
</dbReference>
<dbReference type="GO" id="GO:0005506">
    <property type="term" value="F:iron ion binding"/>
    <property type="evidence" value="ECO:0007669"/>
    <property type="project" value="InterPro"/>
</dbReference>
<dbReference type="GO" id="GO:0004497">
    <property type="term" value="F:monooxygenase activity"/>
    <property type="evidence" value="ECO:0007669"/>
    <property type="project" value="UniProtKB-KW"/>
</dbReference>
<dbReference type="GO" id="GO:0016705">
    <property type="term" value="F:oxidoreductase activity, acting on paired donors, with incorporation or reduction of molecular oxygen"/>
    <property type="evidence" value="ECO:0007669"/>
    <property type="project" value="InterPro"/>
</dbReference>
<dbReference type="CDD" id="cd11072">
    <property type="entry name" value="CYP71-like"/>
    <property type="match status" value="1"/>
</dbReference>
<dbReference type="FunFam" id="1.10.630.10:FF:000008">
    <property type="entry name" value="Cytochrome P450 71D8"/>
    <property type="match status" value="1"/>
</dbReference>
<dbReference type="Gene3D" id="1.10.630.10">
    <property type="entry name" value="Cytochrome P450"/>
    <property type="match status" value="1"/>
</dbReference>
<dbReference type="InterPro" id="IPR001128">
    <property type="entry name" value="Cyt_P450"/>
</dbReference>
<dbReference type="InterPro" id="IPR017972">
    <property type="entry name" value="Cyt_P450_CS"/>
</dbReference>
<dbReference type="InterPro" id="IPR002401">
    <property type="entry name" value="Cyt_P450_E_grp-I"/>
</dbReference>
<dbReference type="InterPro" id="IPR036396">
    <property type="entry name" value="Cyt_P450_sf"/>
</dbReference>
<dbReference type="PANTHER" id="PTHR47955:SF8">
    <property type="entry name" value="CYTOCHROME P450 71D11-LIKE"/>
    <property type="match status" value="1"/>
</dbReference>
<dbReference type="PANTHER" id="PTHR47955">
    <property type="entry name" value="CYTOCHROME P450 FAMILY 71 PROTEIN"/>
    <property type="match status" value="1"/>
</dbReference>
<dbReference type="Pfam" id="PF00067">
    <property type="entry name" value="p450"/>
    <property type="match status" value="1"/>
</dbReference>
<dbReference type="PRINTS" id="PR00463">
    <property type="entry name" value="EP450I"/>
</dbReference>
<dbReference type="PRINTS" id="PR00385">
    <property type="entry name" value="P450"/>
</dbReference>
<dbReference type="SUPFAM" id="SSF48264">
    <property type="entry name" value="Cytochrome P450"/>
    <property type="match status" value="1"/>
</dbReference>
<dbReference type="PROSITE" id="PS00086">
    <property type="entry name" value="CYTOCHROME_P450"/>
    <property type="match status" value="1"/>
</dbReference>
<protein>
    <recommendedName>
        <fullName>Cytochrome P450 71D11</fullName>
        <ecNumber>1.14.-.-</ecNumber>
    </recommendedName>
</protein>
<keyword id="KW-0349">Heme</keyword>
<keyword id="KW-0408">Iron</keyword>
<keyword id="KW-0479">Metal-binding</keyword>
<keyword id="KW-0503">Monooxygenase</keyword>
<keyword id="KW-0560">Oxidoreductase</keyword>
<feature type="chain" id="PRO_0000052122" description="Cytochrome P450 71D11">
    <location>
        <begin position="1" status="less than"/>
        <end position="490"/>
    </location>
</feature>
<feature type="binding site" description="axial binding residue" evidence="1">
    <location>
        <position position="427"/>
    </location>
    <ligand>
        <name>heme</name>
        <dbReference type="ChEBI" id="CHEBI:30413"/>
    </ligand>
    <ligandPart>
        <name>Fe</name>
        <dbReference type="ChEBI" id="CHEBI:18248"/>
    </ligandPart>
</feature>
<feature type="non-terminal residue">
    <location>
        <position position="1"/>
    </location>
</feature>
<accession>O22307</accession>
<proteinExistence type="evidence at transcript level"/>